<sequence length="396" mass="40198">SSTETPPSYNQLNYNENLLRFFNSKPVTAPVELDPPKVESSYVSSARGEDARSTLSPVQGFEGSGGSGSSGNFTTGSNLHMSSVTNTSNAGTGTSGTGNSGDGGGGGGANGTGSGAAPPVTLTESLLNKHNDEMEKFMLKKHRESRGRSGEKNKKSANEAMKMLEYSGPGPGHGHGIKRGGSHSWEGEANKPKQQLTLNTIGGGGGGGVGGGMPLFLDITHASSSSQNKGLAGVGVGGAGGVVGGGGSGTGLGGNGNVGSGNGNNNQPSTNQYTQSRLPCTQNINLWPPFSVGITTPTSVLSSHTAVPPSSFSPQHSLFPTFYYIPASIAASSPSSTNTNPNRPHKHAHVHNSSEKPSTSQAAAATMPLQYMTGVMYPHPSLFYTHPAAAAATAMV</sequence>
<gene>
    <name type="primary">per</name>
</gene>
<reference key="1">
    <citation type="journal article" date="1997" name="Mol. Biol. Evol.">
        <title>Interspecific and intraspecific comparisons of the period locus in the Drosophila willistoni sibling species.</title>
        <authorList>
            <person name="Gleason J.M."/>
            <person name="Powell J.R."/>
        </authorList>
    </citation>
    <scope>NUCLEOTIDE SEQUENCE [GENOMIC DNA]</scope>
    <source>
        <strain>A28</strain>
        <strain>ABM</strain>
        <strain>C2</strain>
        <strain>I1</strain>
        <strain>O11</strain>
        <strain>T1</strain>
    </source>
</reference>
<name>PER_DROPU</name>
<protein>
    <recommendedName>
        <fullName>Period circadian protein</fullName>
    </recommendedName>
</protein>
<dbReference type="EMBL" id="U51080">
    <property type="protein sequence ID" value="AAB41387.1"/>
    <property type="molecule type" value="Genomic_DNA"/>
</dbReference>
<dbReference type="EMBL" id="U51081">
    <property type="protein sequence ID" value="AAB41388.1"/>
    <property type="molecule type" value="Genomic_DNA"/>
</dbReference>
<dbReference type="EMBL" id="U51082">
    <property type="protein sequence ID" value="AAB41389.1"/>
    <property type="molecule type" value="Genomic_DNA"/>
</dbReference>
<dbReference type="EMBL" id="U51083">
    <property type="protein sequence ID" value="AAB41390.1"/>
    <property type="molecule type" value="Genomic_DNA"/>
</dbReference>
<dbReference type="EMBL" id="U51084">
    <property type="protein sequence ID" value="AAB41391.1"/>
    <property type="molecule type" value="Genomic_DNA"/>
</dbReference>
<dbReference type="EMBL" id="U51085">
    <property type="protein sequence ID" value="AAB41392.1"/>
    <property type="molecule type" value="Genomic_DNA"/>
</dbReference>
<dbReference type="GO" id="GO:0005634">
    <property type="term" value="C:nucleus"/>
    <property type="evidence" value="ECO:0007669"/>
    <property type="project" value="UniProtKB-SubCell"/>
</dbReference>
<dbReference type="GO" id="GO:0048471">
    <property type="term" value="C:perinuclear region of cytoplasm"/>
    <property type="evidence" value="ECO:0007669"/>
    <property type="project" value="UniProtKB-SubCell"/>
</dbReference>
<dbReference type="GO" id="GO:0000976">
    <property type="term" value="F:transcription cis-regulatory region binding"/>
    <property type="evidence" value="ECO:0007669"/>
    <property type="project" value="TreeGrafter"/>
</dbReference>
<dbReference type="GO" id="GO:0001222">
    <property type="term" value="F:transcription corepressor binding"/>
    <property type="evidence" value="ECO:0007669"/>
    <property type="project" value="TreeGrafter"/>
</dbReference>
<dbReference type="GO" id="GO:0032922">
    <property type="term" value="P:circadian regulation of gene expression"/>
    <property type="evidence" value="ECO:0007669"/>
    <property type="project" value="TreeGrafter"/>
</dbReference>
<dbReference type="GO" id="GO:0043153">
    <property type="term" value="P:entrainment of circadian clock by photoperiod"/>
    <property type="evidence" value="ECO:0007669"/>
    <property type="project" value="TreeGrafter"/>
</dbReference>
<dbReference type="GO" id="GO:0000122">
    <property type="term" value="P:negative regulation of transcription by RNA polymerase II"/>
    <property type="evidence" value="ECO:0007669"/>
    <property type="project" value="TreeGrafter"/>
</dbReference>
<dbReference type="InterPro" id="IPR050760">
    <property type="entry name" value="Period_circadian_regulator"/>
</dbReference>
<dbReference type="PANTHER" id="PTHR11269">
    <property type="entry name" value="PERIOD CIRCADIAN PROTEIN"/>
    <property type="match status" value="1"/>
</dbReference>
<dbReference type="PANTHER" id="PTHR11269:SF16">
    <property type="entry name" value="PERIOD CIRCADIAN PROTEIN"/>
    <property type="match status" value="1"/>
</dbReference>
<keyword id="KW-0090">Biological rhythms</keyword>
<keyword id="KW-0963">Cytoplasm</keyword>
<keyword id="KW-0539">Nucleus</keyword>
<keyword id="KW-0597">Phosphoprotein</keyword>
<keyword id="KW-0677">Repeat</keyword>
<comment type="function">
    <text evidence="1">Essential for biological clock functions. Determines the period length of circadian and ultradian rhythms; an increase in PER dosage leads to shortened circadian rhythms and a decrease leads to lengthened circadian rhythms. Essential for the circadian rhythmicity of locomotor activity, eclosion behavior, and for the rhythmic component of the male courtship song that originates in the thoracic nervous system. The biological cycle depends on the rhythmic formation and nuclear localization of the TIM-PER complex. Light induces the degradation of TIM, which promotes elimination of PER. Nuclear activity of the heterodimer coordinatively regulates PER and TIM transcription through a negative feedback loop. Behaves as a negative element in circadian transcriptional loop. Does not appear to bind DNA, suggesting indirect transcriptional inhibition (By similarity).</text>
</comment>
<comment type="subunit">
    <text evidence="1">Forms a heterodimer with timeless (TIM); the complex then translocates into the nucleus.</text>
</comment>
<comment type="subcellular location">
    <subcellularLocation>
        <location evidence="1">Nucleus</location>
    </subcellularLocation>
    <subcellularLocation>
        <location evidence="1">Cytoplasm</location>
        <location evidence="1">Perinuclear region</location>
    </subcellularLocation>
    <text evidence="1">Nuclear at specific periods of the day. First accumulates in the perinuclear region about one hour before translocation into the nucleus. Interaction with Tim is required for nuclear localization (By similarity).</text>
</comment>
<comment type="PTM">
    <text evidence="1">Phosphorylated with a circadian rhythmicity, probably by the double-time protein (dbt). Phosphorylation could be implicated in the stability of per monomer and in the formation of heterodimer per-tim (By similarity).</text>
</comment>
<feature type="chain" id="PRO_0000162603" description="Period circadian protein">
    <location>
        <begin position="1" status="less than"/>
        <end position="396" status="greater than"/>
    </location>
</feature>
<feature type="region of interest" description="Disordered" evidence="2">
    <location>
        <begin position="27"/>
        <end position="120"/>
    </location>
</feature>
<feature type="region of interest" description="Disordered" evidence="2">
    <location>
        <begin position="167"/>
        <end position="188"/>
    </location>
</feature>
<feature type="region of interest" description="Disordered" evidence="2">
    <location>
        <begin position="253"/>
        <end position="275"/>
    </location>
</feature>
<feature type="region of interest" description="Disordered" evidence="2">
    <location>
        <begin position="333"/>
        <end position="362"/>
    </location>
</feature>
<feature type="compositionally biased region" description="Gly residues" evidence="2">
    <location>
        <begin position="93"/>
        <end position="114"/>
    </location>
</feature>
<feature type="compositionally biased region" description="Gly residues" evidence="2">
    <location>
        <begin position="253"/>
        <end position="262"/>
    </location>
</feature>
<feature type="compositionally biased region" description="Low complexity" evidence="2">
    <location>
        <begin position="333"/>
        <end position="342"/>
    </location>
</feature>
<feature type="sequence variant" description="In strain: A28.">
    <original>G</original>
    <variation>D</variation>
    <location>
        <position position="107"/>
    </location>
</feature>
<feature type="sequence variant" description="In strain: O11, ABM, A28 and C2.">
    <original>I</original>
    <variation>S</variation>
    <location>
        <position position="201"/>
    </location>
</feature>
<feature type="sequence variant" description="In strain: C2.">
    <original>G</original>
    <variation>V</variation>
    <location>
        <position position="207"/>
    </location>
</feature>
<feature type="sequence variant" description="In strain: O11, ABM and A28.">
    <original>V</original>
    <variation>G</variation>
    <location>
        <position position="209"/>
    </location>
</feature>
<feature type="sequence variant" description="In strain: A28.">
    <original>G</original>
    <variation>GGGGGGG</variation>
    <location>
        <position position="212"/>
    </location>
</feature>
<feature type="sequence variant" description="In strain: O11 and ABM.">
    <original>G</original>
    <variation>GGVVGG</variation>
    <location>
        <position position="212"/>
    </location>
</feature>
<feature type="sequence variant" description="In strain: A28.">
    <original>G</original>
    <variation>GVG</variation>
    <location>
        <position position="237"/>
    </location>
</feature>
<feature type="sequence variant" description="In strain: O11 and ABM.">
    <original>G</original>
    <variation>S</variation>
    <location>
        <position position="251"/>
    </location>
</feature>
<feature type="sequence variant" description="In strain: I1.">
    <original>T</original>
    <variation>I</variation>
    <location>
        <position position="270"/>
    </location>
</feature>
<feature type="sequence variant" description="In strain: A28.">
    <original>S</original>
    <variation>P</variation>
    <location>
        <position position="328"/>
    </location>
</feature>
<feature type="sequence variant" description="In strain: O11.">
    <original>N</original>
    <variation>K</variation>
    <location>
        <position position="338"/>
    </location>
</feature>
<feature type="non-terminal residue">
    <location>
        <position position="1"/>
    </location>
</feature>
<feature type="non-terminal residue">
    <location>
        <position position="396"/>
    </location>
</feature>
<organism>
    <name type="scientific">Drosophila paulistorum</name>
    <name type="common">Fruit fly</name>
    <dbReference type="NCBI Taxonomy" id="46793"/>
    <lineage>
        <taxon>Eukaryota</taxon>
        <taxon>Metazoa</taxon>
        <taxon>Ecdysozoa</taxon>
        <taxon>Arthropoda</taxon>
        <taxon>Hexapoda</taxon>
        <taxon>Insecta</taxon>
        <taxon>Pterygota</taxon>
        <taxon>Neoptera</taxon>
        <taxon>Endopterygota</taxon>
        <taxon>Diptera</taxon>
        <taxon>Brachycera</taxon>
        <taxon>Muscomorpha</taxon>
        <taxon>Ephydroidea</taxon>
        <taxon>Drosophilidae</taxon>
        <taxon>Drosophila</taxon>
        <taxon>Sophophora</taxon>
    </lineage>
</organism>
<proteinExistence type="inferred from homology"/>
<accession>P91697</accession>
<accession>P91692</accession>
<accession>P91693</accession>
<accession>P91694</accession>
<accession>P91695</accession>
<accession>P91696</accession>
<evidence type="ECO:0000250" key="1"/>
<evidence type="ECO:0000256" key="2">
    <source>
        <dbReference type="SAM" id="MobiDB-lite"/>
    </source>
</evidence>